<sequence length="243" mass="26723">MAELDPFGVPAGGPALGNGVAGEEDPAAAFLAQQESEIAGIENDEAFAILDGGAPGSQPHGEPPGIPDAVDGVTNGDYYQESNGPTDSYAAISQVDRLQSEPESIRKWREEQTERLEALDANSRKQEAEWKEKAIKELDEWYARQDEQLQKTKANNRVADEAFYKQPFADVIGYVTNINHPCYSLEQAAEEAFVNDIEESSPGTEWERVARLCDFNPKSSKQAKDVSRMRSVLISLKQAPLVH</sequence>
<feature type="chain" id="PRO_0000205766" description="Clathrin light chain A">
    <location>
        <begin position="1"/>
        <end position="243"/>
    </location>
</feature>
<feature type="region of interest" description="Disordered" evidence="5">
    <location>
        <begin position="1"/>
        <end position="22"/>
    </location>
</feature>
<feature type="region of interest" description="Disordered" evidence="5">
    <location>
        <begin position="49"/>
        <end position="87"/>
    </location>
</feature>
<feature type="region of interest" description="Involved in binding clathrin heavy chain">
    <location>
        <begin position="95"/>
        <end position="157"/>
    </location>
</feature>
<feature type="compositionally biased region" description="Gly residues" evidence="5">
    <location>
        <begin position="10"/>
        <end position="20"/>
    </location>
</feature>
<feature type="modified residue" description="Blocked amino end (Met)">
    <location>
        <position position="1"/>
    </location>
</feature>
<feature type="modified residue" description="Phosphoserine" evidence="3">
    <location>
        <position position="100"/>
    </location>
</feature>
<feature type="modified residue" description="Phosphoserine" evidence="3">
    <location>
        <position position="201"/>
    </location>
</feature>
<feature type="modified residue" description="N6-acetyllysine" evidence="4">
    <location>
        <position position="218"/>
    </location>
</feature>
<feature type="modified residue" description="Phosphoserine" evidence="3">
    <location>
        <position position="231"/>
    </location>
</feature>
<feature type="modified residue" description="N6-acetyllysine" evidence="2">
    <location>
        <position position="237"/>
    </location>
</feature>
<feature type="splice variant" id="VSP_001094" description="In isoform Non-brain." evidence="6">
    <location>
        <begin position="158"/>
        <end position="187"/>
    </location>
</feature>
<feature type="splice variant" id="VSP_024237" description="In isoform 3." evidence="7">
    <location>
        <begin position="176"/>
        <end position="187"/>
    </location>
</feature>
<feature type="sequence conflict" description="In Ref. 1; CAA28542." evidence="8" ref="1">
    <original>P</original>
    <variation>H</variation>
    <location>
        <position position="14"/>
    </location>
</feature>
<organism>
    <name type="scientific">Bos taurus</name>
    <name type="common">Bovine</name>
    <dbReference type="NCBI Taxonomy" id="9913"/>
    <lineage>
        <taxon>Eukaryota</taxon>
        <taxon>Metazoa</taxon>
        <taxon>Chordata</taxon>
        <taxon>Craniata</taxon>
        <taxon>Vertebrata</taxon>
        <taxon>Euteleostomi</taxon>
        <taxon>Mammalia</taxon>
        <taxon>Eutheria</taxon>
        <taxon>Laurasiatheria</taxon>
        <taxon>Artiodactyla</taxon>
        <taxon>Ruminantia</taxon>
        <taxon>Pecora</taxon>
        <taxon>Bovidae</taxon>
        <taxon>Bovinae</taxon>
        <taxon>Bos</taxon>
    </lineage>
</organism>
<evidence type="ECO:0000250" key="1"/>
<evidence type="ECO:0000250" key="2">
    <source>
        <dbReference type="UniProtKB" id="O08585"/>
    </source>
</evidence>
<evidence type="ECO:0000250" key="3">
    <source>
        <dbReference type="UniProtKB" id="P09496"/>
    </source>
</evidence>
<evidence type="ECO:0000250" key="4">
    <source>
        <dbReference type="UniProtKB" id="Q6IRU5"/>
    </source>
</evidence>
<evidence type="ECO:0000256" key="5">
    <source>
        <dbReference type="SAM" id="MobiDB-lite"/>
    </source>
</evidence>
<evidence type="ECO:0000303" key="6">
    <source>
    </source>
</evidence>
<evidence type="ECO:0000303" key="7">
    <source ref="2"/>
</evidence>
<evidence type="ECO:0000305" key="8"/>
<dbReference type="EMBL" id="X04849">
    <property type="protein sequence ID" value="CAA28540.1"/>
    <property type="molecule type" value="mRNA"/>
</dbReference>
<dbReference type="EMBL" id="X04851">
    <property type="protein sequence ID" value="CAA28542.1"/>
    <property type="molecule type" value="mRNA"/>
</dbReference>
<dbReference type="EMBL" id="BC118427">
    <property type="protein sequence ID" value="AAI18428.1"/>
    <property type="molecule type" value="mRNA"/>
</dbReference>
<dbReference type="PIR" id="A26599">
    <property type="entry name" value="A26599"/>
</dbReference>
<dbReference type="RefSeq" id="NP_776447.1">
    <molecule id="P04973-1"/>
    <property type="nucleotide sequence ID" value="NM_174022.2"/>
</dbReference>
<dbReference type="RefSeq" id="XP_005210116.1">
    <property type="nucleotide sequence ID" value="XM_005210059.2"/>
</dbReference>
<dbReference type="RefSeq" id="XP_005210119.1">
    <molecule id="P04973-2"/>
    <property type="nucleotide sequence ID" value="XM_005210062.3"/>
</dbReference>
<dbReference type="PDB" id="1XI4">
    <property type="method" value="EM"/>
    <property type="resolution" value="7.90 A"/>
    <property type="chains" value="J/K/L/M/N/O/P/Q/R=95-164"/>
</dbReference>
<dbReference type="PDB" id="3IYV">
    <property type="method" value="EM"/>
    <property type="resolution" value="7.90 A"/>
    <property type="chains" value="J/K/L/M/N/O/P/Q/R=95-164"/>
</dbReference>
<dbReference type="PDBsum" id="1XI4"/>
<dbReference type="PDBsum" id="3IYV"/>
<dbReference type="SMR" id="P04973"/>
<dbReference type="BioGRID" id="158447">
    <property type="interactions" value="2"/>
</dbReference>
<dbReference type="FunCoup" id="P04973">
    <property type="interactions" value="4286"/>
</dbReference>
<dbReference type="IntAct" id="P04973">
    <property type="interactions" value="2"/>
</dbReference>
<dbReference type="MINT" id="P04973"/>
<dbReference type="STRING" id="9913.ENSBTAP00000001518"/>
<dbReference type="PaxDb" id="9913-ENSBTAP00000001518"/>
<dbReference type="PeptideAtlas" id="P04973"/>
<dbReference type="Ensembl" id="ENSBTAT00000001518.6">
    <molecule id="P04973-1"/>
    <property type="protein sequence ID" value="ENSBTAP00000001518.4"/>
    <property type="gene ID" value="ENSBTAG00000001137.7"/>
</dbReference>
<dbReference type="Ensembl" id="ENSBTAT00000066509.1">
    <molecule id="P04973-3"/>
    <property type="protein sequence ID" value="ENSBTAP00000058861.1"/>
    <property type="gene ID" value="ENSBTAG00000001137.7"/>
</dbReference>
<dbReference type="GeneID" id="281078"/>
<dbReference type="KEGG" id="bta:281078"/>
<dbReference type="CTD" id="1211"/>
<dbReference type="VEuPathDB" id="HostDB:ENSBTAG00000001137"/>
<dbReference type="eggNOG" id="KOG4031">
    <property type="taxonomic scope" value="Eukaryota"/>
</dbReference>
<dbReference type="GeneTree" id="ENSGT00940000157347"/>
<dbReference type="HOGENOM" id="CLU_091462_1_0_1"/>
<dbReference type="InParanoid" id="P04973"/>
<dbReference type="OMA" id="XAAEEAF"/>
<dbReference type="OrthoDB" id="5512at2759"/>
<dbReference type="TreeFam" id="TF313162"/>
<dbReference type="Reactome" id="R-BTA-177504">
    <property type="pathway name" value="Retrograde neurotrophin signalling"/>
</dbReference>
<dbReference type="Reactome" id="R-BTA-190873">
    <property type="pathway name" value="Gap junction degradation"/>
</dbReference>
<dbReference type="Reactome" id="R-BTA-196025">
    <property type="pathway name" value="Formation of annular gap junctions"/>
</dbReference>
<dbReference type="Reactome" id="R-BTA-2132295">
    <property type="pathway name" value="MHC class II antigen presentation"/>
</dbReference>
<dbReference type="Reactome" id="R-BTA-432720">
    <property type="pathway name" value="Lysosome Vesicle Biogenesis"/>
</dbReference>
<dbReference type="Reactome" id="R-BTA-432722">
    <property type="pathway name" value="Golgi Associated Vesicle Biogenesis"/>
</dbReference>
<dbReference type="Reactome" id="R-BTA-437239">
    <property type="pathway name" value="Recycling pathway of L1"/>
</dbReference>
<dbReference type="Reactome" id="R-BTA-5099900">
    <property type="pathway name" value="WNT5A-dependent internalization of FZD4"/>
</dbReference>
<dbReference type="Reactome" id="R-BTA-5140745">
    <property type="pathway name" value="WNT5A-dependent internalization of FZD2, FZD5 and ROR2"/>
</dbReference>
<dbReference type="Reactome" id="R-BTA-8856825">
    <property type="pathway name" value="Cargo recognition for clathrin-mediated endocytosis"/>
</dbReference>
<dbReference type="Reactome" id="R-BTA-8856828">
    <property type="pathway name" value="Clathrin-mediated endocytosis"/>
</dbReference>
<dbReference type="Reactome" id="R-BTA-8866427">
    <property type="pathway name" value="VLDLR internalisation and degradation"/>
</dbReference>
<dbReference type="Reactome" id="R-BTA-8964038">
    <property type="pathway name" value="LDL clearance"/>
</dbReference>
<dbReference type="EvolutionaryTrace" id="P04973"/>
<dbReference type="Proteomes" id="UP000009136">
    <property type="component" value="Chromosome 8"/>
</dbReference>
<dbReference type="Bgee" id="ENSBTAG00000001137">
    <property type="expression patterns" value="Expressed in isthmus of fallopian tube and 105 other cell types or tissues"/>
</dbReference>
<dbReference type="GO" id="GO:0030132">
    <property type="term" value="C:clathrin coat of coated pit"/>
    <property type="evidence" value="ECO:0007669"/>
    <property type="project" value="InterPro"/>
</dbReference>
<dbReference type="GO" id="GO:0030130">
    <property type="term" value="C:clathrin coat of trans-Golgi network vesicle"/>
    <property type="evidence" value="ECO:0007669"/>
    <property type="project" value="InterPro"/>
</dbReference>
<dbReference type="GO" id="GO:0071439">
    <property type="term" value="C:clathrin complex"/>
    <property type="evidence" value="ECO:0007669"/>
    <property type="project" value="Ensembl"/>
</dbReference>
<dbReference type="GO" id="GO:0030125">
    <property type="term" value="C:clathrin vesicle coat"/>
    <property type="evidence" value="ECO:0000318"/>
    <property type="project" value="GO_Central"/>
</dbReference>
<dbReference type="GO" id="GO:0005768">
    <property type="term" value="C:endosome"/>
    <property type="evidence" value="ECO:0007669"/>
    <property type="project" value="Ensembl"/>
</dbReference>
<dbReference type="GO" id="GO:0005764">
    <property type="term" value="C:lysosome"/>
    <property type="evidence" value="ECO:0007669"/>
    <property type="project" value="Ensembl"/>
</dbReference>
<dbReference type="GO" id="GO:0005886">
    <property type="term" value="C:plasma membrane"/>
    <property type="evidence" value="ECO:0000318"/>
    <property type="project" value="GO_Central"/>
</dbReference>
<dbReference type="GO" id="GO:0005819">
    <property type="term" value="C:spindle"/>
    <property type="evidence" value="ECO:0007669"/>
    <property type="project" value="UniProtKB-SubCell"/>
</dbReference>
<dbReference type="GO" id="GO:0030672">
    <property type="term" value="C:synaptic vesicle membrane"/>
    <property type="evidence" value="ECO:0000318"/>
    <property type="project" value="GO_Central"/>
</dbReference>
<dbReference type="GO" id="GO:0032050">
    <property type="term" value="F:clathrin heavy chain binding"/>
    <property type="evidence" value="ECO:0000318"/>
    <property type="project" value="GO_Central"/>
</dbReference>
<dbReference type="GO" id="GO:0005198">
    <property type="term" value="F:structural molecule activity"/>
    <property type="evidence" value="ECO:0007669"/>
    <property type="project" value="InterPro"/>
</dbReference>
<dbReference type="GO" id="GO:0051301">
    <property type="term" value="P:cell division"/>
    <property type="evidence" value="ECO:0007669"/>
    <property type="project" value="UniProtKB-KW"/>
</dbReference>
<dbReference type="GO" id="GO:0048268">
    <property type="term" value="P:clathrin coat assembly"/>
    <property type="evidence" value="ECO:0007669"/>
    <property type="project" value="Ensembl"/>
</dbReference>
<dbReference type="GO" id="GO:0072583">
    <property type="term" value="P:clathrin-dependent endocytosis"/>
    <property type="evidence" value="ECO:0000318"/>
    <property type="project" value="GO_Central"/>
</dbReference>
<dbReference type="GO" id="GO:0006886">
    <property type="term" value="P:intracellular protein transport"/>
    <property type="evidence" value="ECO:0007669"/>
    <property type="project" value="InterPro"/>
</dbReference>
<dbReference type="InterPro" id="IPR000996">
    <property type="entry name" value="Clathrin_L-chain"/>
</dbReference>
<dbReference type="PANTHER" id="PTHR10639">
    <property type="entry name" value="CLATHRIN LIGHT CHAIN"/>
    <property type="match status" value="1"/>
</dbReference>
<dbReference type="PANTHER" id="PTHR10639:SF1">
    <property type="entry name" value="CLATHRIN LIGHT CHAIN A"/>
    <property type="match status" value="1"/>
</dbReference>
<dbReference type="Pfam" id="PF01086">
    <property type="entry name" value="Clathrin_lg_ch"/>
    <property type="match status" value="1"/>
</dbReference>
<dbReference type="PROSITE" id="PS00224">
    <property type="entry name" value="CLATHRIN_LIGHT_CHN_1"/>
    <property type="match status" value="1"/>
</dbReference>
<dbReference type="PROSITE" id="PS00581">
    <property type="entry name" value="CLATHRIN_LIGHT_CHN_2"/>
    <property type="match status" value="1"/>
</dbReference>
<keyword id="KW-0002">3D-structure</keyword>
<keyword id="KW-0007">Acetylation</keyword>
<keyword id="KW-0025">Alternative splicing</keyword>
<keyword id="KW-0106">Calcium</keyword>
<keyword id="KW-0131">Cell cycle</keyword>
<keyword id="KW-0132">Cell division</keyword>
<keyword id="KW-0168">Coated pit</keyword>
<keyword id="KW-0963">Cytoplasm</keyword>
<keyword id="KW-0968">Cytoplasmic vesicle</keyword>
<keyword id="KW-0206">Cytoskeleton</keyword>
<keyword id="KW-0472">Membrane</keyword>
<keyword id="KW-0498">Mitosis</keyword>
<keyword id="KW-0597">Phosphoprotein</keyword>
<keyword id="KW-1185">Reference proteome</keyword>
<proteinExistence type="evidence at protein level"/>
<gene>
    <name type="primary">CLTA</name>
</gene>
<comment type="function">
    <text evidence="3">Clathrin is the major protein of the polyhedral coat of coated pits and vesicles. Acts as a component of the TACC3/ch-TOG/clathrin complex proposed to contribute to stabilization of kinetochore fibers of the mitotic spindle by acting as inter-microtubule bridge (By similarity).</text>
</comment>
<comment type="subunit">
    <text evidence="1 3">Clathrin coats are formed from molecules containing 3 heavy chains and 3 light chains. Interacts with CALY; the interaction stimulates clathrin self-assembly and clathrin-mediated endocytosis (By similarity). Interacts with CKAP5 and TACC3 forming the TACC3/ch-TOG/clathrin complex located at spindle inter-microtubules bridges; the complex implicates clathrin triskelions (By similarity).</text>
</comment>
<comment type="subcellular location">
    <subcellularLocation>
        <location>Cytoplasmic vesicle membrane</location>
        <topology>Peripheral membrane protein</topology>
        <orientation>Cytoplasmic side</orientation>
    </subcellularLocation>
    <subcellularLocation>
        <location>Membrane</location>
        <location>Coated pit</location>
        <topology>Peripheral membrane protein</topology>
        <orientation>Cytoplasmic side</orientation>
    </subcellularLocation>
    <subcellularLocation>
        <location evidence="3">Cytoplasm</location>
        <location evidence="3">Cytoskeleton</location>
        <location evidence="3">Spindle</location>
    </subcellularLocation>
    <text evidence="3">Cytoplasmic face of coated pits and vesicles. In complex with TACC3 and CKAP5 (forming the TACC3/ch-TOG/clathrin complex) localized to inter-microtubule bridges in mitotic spindles.</text>
</comment>
<comment type="alternative products">
    <event type="alternative splicing"/>
    <isoform>
        <id>P04973-1</id>
        <name>Brain</name>
        <sequence type="displayed"/>
    </isoform>
    <isoform>
        <id>P04973-2</id>
        <name>Non-brain</name>
        <sequence type="described" ref="VSP_001094"/>
    </isoform>
    <isoform>
        <id>P04973-3</id>
        <name>3</name>
        <sequence type="described" ref="VSP_024237"/>
    </isoform>
</comment>
<comment type="similarity">
    <text evidence="8">Belongs to the clathrin light chain family.</text>
</comment>
<name>CLCA_BOVIN</name>
<protein>
    <recommendedName>
        <fullName>Clathrin light chain A</fullName>
        <shortName>Lca</shortName>
    </recommendedName>
</protein>
<reference key="1">
    <citation type="journal article" date="1987" name="Nature">
        <title>Clathrin light chains contain brain-specific insertion sequences and a region of homology with intermediate filaments.</title>
        <authorList>
            <person name="Jackson A.P."/>
            <person name="Seow H.-F."/>
            <person name="Holmes N."/>
            <person name="Drickamer K."/>
            <person name="Parham P."/>
        </authorList>
    </citation>
    <scope>NUCLEOTIDE SEQUENCE [MRNA] (ISOFORMS BRAIN AND NON-BRAIN)</scope>
</reference>
<reference key="2">
    <citation type="submission" date="2006-06" db="EMBL/GenBank/DDBJ databases">
        <authorList>
            <consortium name="NIH - Mammalian Gene Collection (MGC) project"/>
        </authorList>
    </citation>
    <scope>NUCLEOTIDE SEQUENCE [LARGE SCALE MRNA] (ISOFORM 3)</scope>
    <source>
        <strain>Hereford</strain>
        <tissue>Fetal cerebellum</tissue>
    </source>
</reference>
<reference key="3">
    <citation type="journal article" date="1987" name="Nature">
        <title>Localization of clathrin light-chain sequences mediating heavy-chain binding and coated vesicle diversity.</title>
        <authorList>
            <person name="Brodsky F.M."/>
            <person name="Galloway C.J."/>
            <person name="Blank G.S."/>
            <person name="Jackson A.P."/>
            <person name="Seow H.-F."/>
            <person name="Drickamer K."/>
            <person name="Parham P."/>
        </authorList>
    </citation>
    <scope>DOMAIN CLATHRIN HEAVY CHAIN BINDING</scope>
</reference>
<accession>P04973</accession>
<accession>Q17QD2</accession>